<gene>
    <name type="primary">LATH</name>
</gene>
<sequence>QQIPPEVSSQITDALTQGLLDGNFLSLLNAINLEGLLNTILDQVTGLLNILVGPLLGSSNAEIKLQDARLLQLSLEFSPDSKGIDIWIPLELSVYLKLLILEPLTLYVRTDIRAQLQLESDEDGKYRLAFGHCTLLPRAIELQTGNPLSLTVNAVLGTIENTLGNFITEDLGAGLCPTLNSLVSNLNLQLVNNLINLILDRANVD</sequence>
<protein>
    <recommendedName>
        <fullName>Latherin</fullName>
    </recommendedName>
</protein>
<reference key="1">
    <citation type="submission" date="2003-01" db="EMBL/GenBank/DDBJ databases">
        <title>Latherin -- the surfactant protein from the sweat of the Chapman's/Damara zebra (Equus burchelli antiquorum).</title>
        <authorList>
            <person name="Fleming R.I."/>
            <person name="Holdstock N."/>
            <person name="Cooper A."/>
            <person name="Kennedy M.W."/>
        </authorList>
    </citation>
    <scope>NUCLEOTIDE SEQUENCE [MRNA]</scope>
    <source>
        <tissue>Sweat gland</tissue>
    </source>
</reference>
<comment type="function">
    <text evidence="1">Major protein in sweat, has surfactant properties.</text>
</comment>
<comment type="subunit">
    <text evidence="1">Monomer.</text>
</comment>
<comment type="subcellular location">
    <subcellularLocation>
        <location evidence="1">Secreted</location>
    </subcellularLocation>
</comment>
<comment type="similarity">
    <text evidence="2">Belongs to the BPI/LBP/Plunc superfamily. Plunc family.</text>
</comment>
<accession>Q865V1</accession>
<keyword id="KW-1015">Disulfide bond</keyword>
<keyword id="KW-0964">Secreted</keyword>
<organism>
    <name type="scientific">Equus quagga burchellii</name>
    <name type="common">Burchell's zebra</name>
    <name type="synonym">Equus burchelli</name>
    <dbReference type="NCBI Taxonomy" id="89252"/>
    <lineage>
        <taxon>Eukaryota</taxon>
        <taxon>Metazoa</taxon>
        <taxon>Chordata</taxon>
        <taxon>Craniata</taxon>
        <taxon>Vertebrata</taxon>
        <taxon>Euteleostomi</taxon>
        <taxon>Mammalia</taxon>
        <taxon>Eutheria</taxon>
        <taxon>Laurasiatheria</taxon>
        <taxon>Perissodactyla</taxon>
        <taxon>Equidae</taxon>
        <taxon>Equus</taxon>
        <taxon>Equus quagga</taxon>
    </lineage>
</organism>
<dbReference type="EMBL" id="AY226145">
    <property type="protein sequence ID" value="AAO73936.1"/>
    <property type="molecule type" value="mRNA"/>
</dbReference>
<dbReference type="SMR" id="Q865V1"/>
<dbReference type="GO" id="GO:0005576">
    <property type="term" value="C:extracellular region"/>
    <property type="evidence" value="ECO:0007669"/>
    <property type="project" value="UniProtKB-SubCell"/>
</dbReference>
<dbReference type="GO" id="GO:0008289">
    <property type="term" value="F:lipid binding"/>
    <property type="evidence" value="ECO:0007669"/>
    <property type="project" value="InterPro"/>
</dbReference>
<dbReference type="GO" id="GO:0043129">
    <property type="term" value="P:surfactant homeostasis"/>
    <property type="evidence" value="ECO:0007669"/>
    <property type="project" value="TreeGrafter"/>
</dbReference>
<dbReference type="Gene3D" id="3.15.10.10">
    <property type="entry name" value="Bactericidal permeability-increasing protein, domain 1"/>
    <property type="match status" value="1"/>
</dbReference>
<dbReference type="InterPro" id="IPR017943">
    <property type="entry name" value="Bactericidal_perm-incr_a/b_dom"/>
</dbReference>
<dbReference type="InterPro" id="IPR051902">
    <property type="entry name" value="BPI_fold-superfamily_member"/>
</dbReference>
<dbReference type="InterPro" id="IPR017942">
    <property type="entry name" value="Lipid-bd_serum_glycop_N"/>
</dbReference>
<dbReference type="PANTHER" id="PTHR47015">
    <property type="entry name" value="BPI FOLD-CONTAINING FAMILY A MEMBER 1"/>
    <property type="match status" value="1"/>
</dbReference>
<dbReference type="PANTHER" id="PTHR47015:SF3">
    <property type="entry name" value="BPIFA4P PROTEIN-RELATED"/>
    <property type="match status" value="1"/>
</dbReference>
<dbReference type="Pfam" id="PF01273">
    <property type="entry name" value="LBP_BPI_CETP"/>
    <property type="match status" value="1"/>
</dbReference>
<dbReference type="SUPFAM" id="SSF55394">
    <property type="entry name" value="Bactericidal permeability-increasing protein, BPI"/>
    <property type="match status" value="1"/>
</dbReference>
<feature type="chain" id="PRO_0000089161" description="Latherin">
    <location>
        <begin position="1" status="less than"/>
        <end position="205" status="greater than"/>
    </location>
</feature>
<feature type="disulfide bond" evidence="1">
    <location>
        <begin position="133"/>
        <end position="176"/>
    </location>
</feature>
<feature type="non-terminal residue">
    <location>
        <position position="1"/>
    </location>
</feature>
<feature type="non-terminal residue">
    <location>
        <position position="205"/>
    </location>
</feature>
<name>LATH_EQUQB</name>
<proteinExistence type="evidence at transcript level"/>
<evidence type="ECO:0000250" key="1"/>
<evidence type="ECO:0000305" key="2"/>